<sequence length="269" mass="28774">MQLPANPFKAALRRAEPLYGIWAGFATPYAAEIIATTGYDWMLVDGEHAPNTVPTLLGQLQAVAPYATHPVVRAVQGDTVLIKQLLDVGVQTLMVPMVETAEQARELVRAMRYPPHGVRGVGGGLTRATRWDAVPDYIRTAHEQLCLIVQIESPRGVAHAAEIAAVEGVDAVFIGPADLSTGMGHAGDASQGEVQEAIRRTVQATLAAGKACGILAPREEDARRYADWGCRFIAVGIDISLLRQAALANLGRYRATQATDQAAPASRTY</sequence>
<name>HPAAL_DELAS</name>
<evidence type="ECO:0000250" key="1">
    <source>
        <dbReference type="UniProtKB" id="Q47098"/>
    </source>
</evidence>
<evidence type="ECO:0000269" key="2">
    <source ref="2"/>
</evidence>
<evidence type="ECO:0000303" key="3">
    <source ref="2"/>
</evidence>
<evidence type="ECO:0000305" key="4"/>
<evidence type="ECO:0000312" key="5">
    <source>
        <dbReference type="EMBL" id="ABX32938.1"/>
    </source>
</evidence>
<reference key="1">
    <citation type="submission" date="2007-11" db="EMBL/GenBank/DDBJ databases">
        <title>Complete sequence of Delftia acidovorans DSM 14801 / SPH-1.</title>
        <authorList>
            <person name="Copeland A."/>
            <person name="Lucas S."/>
            <person name="Lapidus A."/>
            <person name="Barry K."/>
            <person name="Glavina del Rio T."/>
            <person name="Dalin E."/>
            <person name="Tice H."/>
            <person name="Pitluck S."/>
            <person name="Lowry S."/>
            <person name="Clum A."/>
            <person name="Schmutz J."/>
            <person name="Larimer F."/>
            <person name="Land M."/>
            <person name="Hauser L."/>
            <person name="Kyrpides N."/>
            <person name="Kim E."/>
            <person name="Schleheck D."/>
            <person name="Richardson P."/>
        </authorList>
    </citation>
    <scope>NUCLEOTIDE SEQUENCE [LARGE SCALE GENOMIC DNA]</scope>
    <source>
        <strain>DSM 14801 / SPH-1</strain>
    </source>
</reference>
<reference key="2">
    <citation type="journal article" date="2017" name="Green Chem.">
        <title>Expanding the reaction space of aldolases using hydroxypyruvate as a nucleophilic substrate.</title>
        <authorList>
            <person name="de Berardinis V."/>
            <person name="Guerard-Helaine C."/>
            <person name="Darii E."/>
            <person name="Bastard K."/>
            <person name="Helaine V."/>
            <person name="Mariage A."/>
            <person name="Petit J.-L."/>
            <person name="Poupard N."/>
            <person name="Sanchez-Moreno I."/>
            <person name="Stam M."/>
            <person name="Gefflaut T."/>
            <person name="Salanoubat M."/>
            <person name="Lemaire M."/>
        </authorList>
    </citation>
    <scope>FUNCTION</scope>
    <scope>CATALYTIC ACTIVITY</scope>
</reference>
<comment type="function">
    <text evidence="2">Aldolase which can catalyze in vitro the aldolisation reaction between hydroxypyruvate (HPA) or pyruvate (PA) and D-glyceraldehyde (D-GA) (Ref.2). The condensation of pyruvate and D-glyceraldehyde produces 2-dehydro-3-deoxy-L-galactonate as the major product (Ref.2). Has weak activity with hydroxypyruvate and D-glyceraldehyde (Ref.2).</text>
</comment>
<comment type="catalytic activity">
    <reaction evidence="2">
        <text>D-glyceraldehyde + pyruvate = 2-dehydro-3-deoxy-L-galactonate</text>
        <dbReference type="Rhea" id="RHEA:80055"/>
        <dbReference type="ChEBI" id="CHEBI:15361"/>
        <dbReference type="ChEBI" id="CHEBI:17378"/>
        <dbReference type="ChEBI" id="CHEBI:75545"/>
    </reaction>
</comment>
<comment type="cofactor">
    <cofactor evidence="1">
        <name>a divalent metal cation</name>
        <dbReference type="ChEBI" id="CHEBI:60240"/>
    </cofactor>
</comment>
<comment type="similarity">
    <text evidence="4">Belongs to the HpcH/HpaI aldolase family.</text>
</comment>
<organism>
    <name type="scientific">Delftia acidovorans (strain DSM 14801 / SPH-1)</name>
    <dbReference type="NCBI Taxonomy" id="398578"/>
    <lineage>
        <taxon>Bacteria</taxon>
        <taxon>Pseudomonadati</taxon>
        <taxon>Pseudomonadota</taxon>
        <taxon>Betaproteobacteria</taxon>
        <taxon>Burkholderiales</taxon>
        <taxon>Comamonadaceae</taxon>
        <taxon>Delftia</taxon>
    </lineage>
</organism>
<protein>
    <recommendedName>
        <fullName evidence="3">Hydroxypyruvate/pyruvate aldolase</fullName>
        <shortName evidence="3">HPA/PA aldolase</shortName>
        <ecNumber evidence="2">4.1.2.-</ecNumber>
    </recommendedName>
</protein>
<keyword id="KW-0456">Lyase</keyword>
<keyword id="KW-0479">Metal-binding</keyword>
<keyword id="KW-0670">Pyruvate</keyword>
<keyword id="KW-1185">Reference proteome</keyword>
<dbReference type="EC" id="4.1.2.-" evidence="2"/>
<dbReference type="EMBL" id="CP000884">
    <property type="protein sequence ID" value="ABX32938.1"/>
    <property type="molecule type" value="Genomic_DNA"/>
</dbReference>
<dbReference type="RefSeq" id="WP_012202231.1">
    <property type="nucleotide sequence ID" value="NC_010002.1"/>
</dbReference>
<dbReference type="SMR" id="A9BQY3"/>
<dbReference type="STRING" id="398578.Daci_0292"/>
<dbReference type="GeneID" id="24115215"/>
<dbReference type="KEGG" id="dac:Daci_0292"/>
<dbReference type="eggNOG" id="COG3836">
    <property type="taxonomic scope" value="Bacteria"/>
</dbReference>
<dbReference type="HOGENOM" id="CLU_059964_1_0_4"/>
<dbReference type="Proteomes" id="UP000000784">
    <property type="component" value="Chromosome"/>
</dbReference>
<dbReference type="GO" id="GO:0005737">
    <property type="term" value="C:cytoplasm"/>
    <property type="evidence" value="ECO:0007669"/>
    <property type="project" value="TreeGrafter"/>
</dbReference>
<dbReference type="GO" id="GO:0008672">
    <property type="term" value="F:2-dehydro-3-deoxyglucarate aldolase activity"/>
    <property type="evidence" value="ECO:0007669"/>
    <property type="project" value="UniProtKB-EC"/>
</dbReference>
<dbReference type="GO" id="GO:0046872">
    <property type="term" value="F:metal ion binding"/>
    <property type="evidence" value="ECO:0007669"/>
    <property type="project" value="UniProtKB-KW"/>
</dbReference>
<dbReference type="FunFam" id="3.20.20.60:FF:000004">
    <property type="entry name" value="5-keto-4-deoxy-D-glucarate aldolase"/>
    <property type="match status" value="1"/>
</dbReference>
<dbReference type="Gene3D" id="3.20.20.60">
    <property type="entry name" value="Phosphoenolpyruvate-binding domains"/>
    <property type="match status" value="1"/>
</dbReference>
<dbReference type="InterPro" id="IPR005000">
    <property type="entry name" value="Aldolase/citrate-lyase_domain"/>
</dbReference>
<dbReference type="InterPro" id="IPR050251">
    <property type="entry name" value="HpcH-HpaI_aldolase"/>
</dbReference>
<dbReference type="InterPro" id="IPR015813">
    <property type="entry name" value="Pyrv/PenolPyrv_kinase-like_dom"/>
</dbReference>
<dbReference type="InterPro" id="IPR040442">
    <property type="entry name" value="Pyrv_kinase-like_dom_sf"/>
</dbReference>
<dbReference type="PANTHER" id="PTHR30502">
    <property type="entry name" value="2-KETO-3-DEOXY-L-RHAMNONATE ALDOLASE"/>
    <property type="match status" value="1"/>
</dbReference>
<dbReference type="PANTHER" id="PTHR30502:SF0">
    <property type="entry name" value="PHOSPHOENOLPYRUVATE CARBOXYLASE FAMILY PROTEIN"/>
    <property type="match status" value="1"/>
</dbReference>
<dbReference type="Pfam" id="PF03328">
    <property type="entry name" value="HpcH_HpaI"/>
    <property type="match status" value="1"/>
</dbReference>
<dbReference type="SUPFAM" id="SSF51621">
    <property type="entry name" value="Phosphoenolpyruvate/pyruvate domain"/>
    <property type="match status" value="1"/>
</dbReference>
<proteinExistence type="evidence at protein level"/>
<gene>
    <name evidence="5" type="ordered locus">Daci_0292</name>
</gene>
<accession>A9BQY3</accession>
<feature type="chain" id="PRO_0000460951" description="Hydroxypyruvate/pyruvate aldolase">
    <location>
        <begin position="1"/>
        <end position="269"/>
    </location>
</feature>
<feature type="active site" description="Proton acceptor" evidence="1">
    <location>
        <position position="48"/>
    </location>
</feature>
<feature type="binding site" evidence="1">
    <location>
        <position position="152"/>
    </location>
    <ligand>
        <name>a divalent metal cation</name>
        <dbReference type="ChEBI" id="CHEBI:60240"/>
    </ligand>
</feature>
<feature type="binding site" evidence="1">
    <location>
        <position position="178"/>
    </location>
    <ligand>
        <name>a divalent metal cation</name>
        <dbReference type="ChEBI" id="CHEBI:60240"/>
    </ligand>
</feature>
<feature type="site" description="Transition state stabilizer" evidence="1">
    <location>
        <position position="73"/>
    </location>
</feature>
<feature type="site" description="Increases basicity of active site His" evidence="1">
    <location>
        <position position="87"/>
    </location>
</feature>